<reference evidence="2" key="1">
    <citation type="journal article" date="2000" name="Science">
        <title>The genome sequence of Drosophila melanogaster.</title>
        <authorList>
            <person name="Adams M.D."/>
            <person name="Celniker S.E."/>
            <person name="Holt R.A."/>
            <person name="Evans C.A."/>
            <person name="Gocayne J.D."/>
            <person name="Amanatides P.G."/>
            <person name="Scherer S.E."/>
            <person name="Li P.W."/>
            <person name="Hoskins R.A."/>
            <person name="Galle R.F."/>
            <person name="George R.A."/>
            <person name="Lewis S.E."/>
            <person name="Richards S."/>
            <person name="Ashburner M."/>
            <person name="Henderson S.N."/>
            <person name="Sutton G.G."/>
            <person name="Wortman J.R."/>
            <person name="Yandell M.D."/>
            <person name="Zhang Q."/>
            <person name="Chen L.X."/>
            <person name="Brandon R.C."/>
            <person name="Rogers Y.-H.C."/>
            <person name="Blazej R.G."/>
            <person name="Champe M."/>
            <person name="Pfeiffer B.D."/>
            <person name="Wan K.H."/>
            <person name="Doyle C."/>
            <person name="Baxter E.G."/>
            <person name="Helt G."/>
            <person name="Nelson C.R."/>
            <person name="Miklos G.L.G."/>
            <person name="Abril J.F."/>
            <person name="Agbayani A."/>
            <person name="An H.-J."/>
            <person name="Andrews-Pfannkoch C."/>
            <person name="Baldwin D."/>
            <person name="Ballew R.M."/>
            <person name="Basu A."/>
            <person name="Baxendale J."/>
            <person name="Bayraktaroglu L."/>
            <person name="Beasley E.M."/>
            <person name="Beeson K.Y."/>
            <person name="Benos P.V."/>
            <person name="Berman B.P."/>
            <person name="Bhandari D."/>
            <person name="Bolshakov S."/>
            <person name="Borkova D."/>
            <person name="Botchan M.R."/>
            <person name="Bouck J."/>
            <person name="Brokstein P."/>
            <person name="Brottier P."/>
            <person name="Burtis K.C."/>
            <person name="Busam D.A."/>
            <person name="Butler H."/>
            <person name="Cadieu E."/>
            <person name="Center A."/>
            <person name="Chandra I."/>
            <person name="Cherry J.M."/>
            <person name="Cawley S."/>
            <person name="Dahlke C."/>
            <person name="Davenport L.B."/>
            <person name="Davies P."/>
            <person name="de Pablos B."/>
            <person name="Delcher A."/>
            <person name="Deng Z."/>
            <person name="Mays A.D."/>
            <person name="Dew I."/>
            <person name="Dietz S.M."/>
            <person name="Dodson K."/>
            <person name="Doup L.E."/>
            <person name="Downes M."/>
            <person name="Dugan-Rocha S."/>
            <person name="Dunkov B.C."/>
            <person name="Dunn P."/>
            <person name="Durbin K.J."/>
            <person name="Evangelista C.C."/>
            <person name="Ferraz C."/>
            <person name="Ferriera S."/>
            <person name="Fleischmann W."/>
            <person name="Fosler C."/>
            <person name="Gabrielian A.E."/>
            <person name="Garg N.S."/>
            <person name="Gelbart W.M."/>
            <person name="Glasser K."/>
            <person name="Glodek A."/>
            <person name="Gong F."/>
            <person name="Gorrell J.H."/>
            <person name="Gu Z."/>
            <person name="Guan P."/>
            <person name="Harris M."/>
            <person name="Harris N.L."/>
            <person name="Harvey D.A."/>
            <person name="Heiman T.J."/>
            <person name="Hernandez J.R."/>
            <person name="Houck J."/>
            <person name="Hostin D."/>
            <person name="Houston K.A."/>
            <person name="Howland T.J."/>
            <person name="Wei M.-H."/>
            <person name="Ibegwam C."/>
            <person name="Jalali M."/>
            <person name="Kalush F."/>
            <person name="Karpen G.H."/>
            <person name="Ke Z."/>
            <person name="Kennison J.A."/>
            <person name="Ketchum K.A."/>
            <person name="Kimmel B.E."/>
            <person name="Kodira C.D."/>
            <person name="Kraft C.L."/>
            <person name="Kravitz S."/>
            <person name="Kulp D."/>
            <person name="Lai Z."/>
            <person name="Lasko P."/>
            <person name="Lei Y."/>
            <person name="Levitsky A.A."/>
            <person name="Li J.H."/>
            <person name="Li Z."/>
            <person name="Liang Y."/>
            <person name="Lin X."/>
            <person name="Liu X."/>
            <person name="Mattei B."/>
            <person name="McIntosh T.C."/>
            <person name="McLeod M.P."/>
            <person name="McPherson D."/>
            <person name="Merkulov G."/>
            <person name="Milshina N.V."/>
            <person name="Mobarry C."/>
            <person name="Morris J."/>
            <person name="Moshrefi A."/>
            <person name="Mount S.M."/>
            <person name="Moy M."/>
            <person name="Murphy B."/>
            <person name="Murphy L."/>
            <person name="Muzny D.M."/>
            <person name="Nelson D.L."/>
            <person name="Nelson D.R."/>
            <person name="Nelson K.A."/>
            <person name="Nixon K."/>
            <person name="Nusskern D.R."/>
            <person name="Pacleb J.M."/>
            <person name="Palazzolo M."/>
            <person name="Pittman G.S."/>
            <person name="Pan S."/>
            <person name="Pollard J."/>
            <person name="Puri V."/>
            <person name="Reese M.G."/>
            <person name="Reinert K."/>
            <person name="Remington K."/>
            <person name="Saunders R.D.C."/>
            <person name="Scheeler F."/>
            <person name="Shen H."/>
            <person name="Shue B.C."/>
            <person name="Siden-Kiamos I."/>
            <person name="Simpson M."/>
            <person name="Skupski M.P."/>
            <person name="Smith T.J."/>
            <person name="Spier E."/>
            <person name="Spradling A.C."/>
            <person name="Stapleton M."/>
            <person name="Strong R."/>
            <person name="Sun E."/>
            <person name="Svirskas R."/>
            <person name="Tector C."/>
            <person name="Turner R."/>
            <person name="Venter E."/>
            <person name="Wang A.H."/>
            <person name="Wang X."/>
            <person name="Wang Z.-Y."/>
            <person name="Wassarman D.A."/>
            <person name="Weinstock G.M."/>
            <person name="Weissenbach J."/>
            <person name="Williams S.M."/>
            <person name="Woodage T."/>
            <person name="Worley K.C."/>
            <person name="Wu D."/>
            <person name="Yang S."/>
            <person name="Yao Q.A."/>
            <person name="Ye J."/>
            <person name="Yeh R.-F."/>
            <person name="Zaveri J.S."/>
            <person name="Zhan M."/>
            <person name="Zhang G."/>
            <person name="Zhao Q."/>
            <person name="Zheng L."/>
            <person name="Zheng X.H."/>
            <person name="Zhong F.N."/>
            <person name="Zhong W."/>
            <person name="Zhou X."/>
            <person name="Zhu S.C."/>
            <person name="Zhu X."/>
            <person name="Smith H.O."/>
            <person name="Gibbs R.A."/>
            <person name="Myers E.W."/>
            <person name="Rubin G.M."/>
            <person name="Venter J.C."/>
        </authorList>
    </citation>
    <scope>NUCLEOTIDE SEQUENCE [LARGE SCALE GENOMIC DNA]</scope>
    <source>
        <strain>Berkeley</strain>
    </source>
</reference>
<reference key="2">
    <citation type="journal article" date="2002" name="Genome Biol.">
        <title>Annotation of the Drosophila melanogaster euchromatic genome: a systematic review.</title>
        <authorList>
            <person name="Misra S."/>
            <person name="Crosby M.A."/>
            <person name="Mungall C.J."/>
            <person name="Matthews B.B."/>
            <person name="Campbell K.S."/>
            <person name="Hradecky P."/>
            <person name="Huang Y."/>
            <person name="Kaminker J.S."/>
            <person name="Millburn G.H."/>
            <person name="Prochnik S.E."/>
            <person name="Smith C.D."/>
            <person name="Tupy J.L."/>
            <person name="Whitfield E.J."/>
            <person name="Bayraktaroglu L."/>
            <person name="Berman B.P."/>
            <person name="Bettencourt B.R."/>
            <person name="Celniker S.E."/>
            <person name="de Grey A.D.N.J."/>
            <person name="Drysdale R.A."/>
            <person name="Harris N.L."/>
            <person name="Richter J."/>
            <person name="Russo S."/>
            <person name="Schroeder A.J."/>
            <person name="Shu S.Q."/>
            <person name="Stapleton M."/>
            <person name="Yamada C."/>
            <person name="Ashburner M."/>
            <person name="Gelbart W.M."/>
            <person name="Rubin G.M."/>
            <person name="Lewis S.E."/>
        </authorList>
    </citation>
    <scope>GENOME REANNOTATION</scope>
    <source>
        <strain>Berkeley</strain>
    </source>
</reference>
<reference evidence="2" key="3">
    <citation type="journal article" date="2002" name="Genome Biol.">
        <title>A Drosophila full-length cDNA resource.</title>
        <authorList>
            <person name="Stapleton M."/>
            <person name="Carlson J.W."/>
            <person name="Brokstein P."/>
            <person name="Yu C."/>
            <person name="Champe M."/>
            <person name="George R.A."/>
            <person name="Guarin H."/>
            <person name="Kronmiller B."/>
            <person name="Pacleb J.M."/>
            <person name="Park S."/>
            <person name="Wan K.H."/>
            <person name="Rubin G.M."/>
            <person name="Celniker S.E."/>
        </authorList>
    </citation>
    <scope>NUCLEOTIDE SEQUENCE [LARGE SCALE MRNA]</scope>
    <source>
        <strain>Berkeley</strain>
        <tissue>Embryo</tissue>
    </source>
</reference>
<name>GPAN1_DROME</name>
<dbReference type="EMBL" id="AE013599">
    <property type="protein sequence ID" value="AAF58151.1"/>
    <property type="molecule type" value="Genomic_DNA"/>
</dbReference>
<dbReference type="EMBL" id="AY095195">
    <property type="protein sequence ID" value="AAM12288.1"/>
    <property type="molecule type" value="mRNA"/>
</dbReference>
<dbReference type="RefSeq" id="NP_611028.1">
    <property type="nucleotide sequence ID" value="NM_137184.2"/>
</dbReference>
<dbReference type="SMR" id="Q9V7A7"/>
<dbReference type="BioGRID" id="62433">
    <property type="interactions" value="2"/>
</dbReference>
<dbReference type="FunCoup" id="Q9V7A7">
    <property type="interactions" value="132"/>
</dbReference>
<dbReference type="IntAct" id="Q9V7A7">
    <property type="interactions" value="3"/>
</dbReference>
<dbReference type="STRING" id="7227.FBpp0086524"/>
<dbReference type="PaxDb" id="7227-FBpp0086524"/>
<dbReference type="DNASU" id="36696"/>
<dbReference type="EnsemblMetazoa" id="FBtr0087392">
    <property type="protein sequence ID" value="FBpp0086524"/>
    <property type="gene ID" value="FBgn0034008"/>
</dbReference>
<dbReference type="GeneID" id="36696"/>
<dbReference type="KEGG" id="dme:Dmel_CG8152"/>
<dbReference type="UCSC" id="CG8152-RA">
    <property type="organism name" value="d. melanogaster"/>
</dbReference>
<dbReference type="AGR" id="FB:FBgn0034008"/>
<dbReference type="FlyBase" id="FBgn0034008">
    <property type="gene designation" value="CG8152"/>
</dbReference>
<dbReference type="VEuPathDB" id="VectorBase:FBgn0034008"/>
<dbReference type="eggNOG" id="KOG2384">
    <property type="taxonomic scope" value="Eukaryota"/>
</dbReference>
<dbReference type="GeneTree" id="ENSGT00390000003292"/>
<dbReference type="HOGENOM" id="CLU_048068_2_0_1"/>
<dbReference type="InParanoid" id="Q9V7A7"/>
<dbReference type="OMA" id="QGWDQEH"/>
<dbReference type="OrthoDB" id="4735278at2759"/>
<dbReference type="PhylomeDB" id="Q9V7A7"/>
<dbReference type="BioGRID-ORCS" id="36696">
    <property type="hits" value="0 hits in 1 CRISPR screen"/>
</dbReference>
<dbReference type="GenomeRNAi" id="36696"/>
<dbReference type="PRO" id="PR:Q9V7A7"/>
<dbReference type="Proteomes" id="UP000000803">
    <property type="component" value="Chromosome 2R"/>
</dbReference>
<dbReference type="Bgee" id="FBgn0034008">
    <property type="expression patterns" value="Expressed in secondary oocyte and 39 other cell types or tissues"/>
</dbReference>
<dbReference type="ExpressionAtlas" id="Q9V7A7">
    <property type="expression patterns" value="baseline and differential"/>
</dbReference>
<dbReference type="GO" id="GO:0003676">
    <property type="term" value="F:nucleic acid binding"/>
    <property type="evidence" value="ECO:0007669"/>
    <property type="project" value="InterPro"/>
</dbReference>
<dbReference type="Gene3D" id="1.25.40.20">
    <property type="entry name" value="Ankyrin repeat-containing domain"/>
    <property type="match status" value="1"/>
</dbReference>
<dbReference type="InterPro" id="IPR002110">
    <property type="entry name" value="Ankyrin_rpt"/>
</dbReference>
<dbReference type="InterPro" id="IPR036770">
    <property type="entry name" value="Ankyrin_rpt-contain_sf"/>
</dbReference>
<dbReference type="InterPro" id="IPR000467">
    <property type="entry name" value="G_patch_dom"/>
</dbReference>
<dbReference type="InterPro" id="IPR039146">
    <property type="entry name" value="GPANK1"/>
</dbReference>
<dbReference type="PANTHER" id="PTHR20923">
    <property type="entry name" value="BAT4 PROTEIN-RELATED"/>
    <property type="match status" value="1"/>
</dbReference>
<dbReference type="PANTHER" id="PTHR20923:SF1">
    <property type="entry name" value="G PATCH DOMAIN AND ANKYRIN REPEAT-CONTAINING PROTEIN 1"/>
    <property type="match status" value="1"/>
</dbReference>
<dbReference type="Pfam" id="PF12796">
    <property type="entry name" value="Ank_2"/>
    <property type="match status" value="1"/>
</dbReference>
<dbReference type="Pfam" id="PF01585">
    <property type="entry name" value="G-patch"/>
    <property type="match status" value="1"/>
</dbReference>
<dbReference type="SMART" id="SM00248">
    <property type="entry name" value="ANK"/>
    <property type="match status" value="2"/>
</dbReference>
<dbReference type="SMART" id="SM00443">
    <property type="entry name" value="G_patch"/>
    <property type="match status" value="1"/>
</dbReference>
<dbReference type="SUPFAM" id="SSF48403">
    <property type="entry name" value="Ankyrin repeat"/>
    <property type="match status" value="1"/>
</dbReference>
<dbReference type="PROSITE" id="PS50297">
    <property type="entry name" value="ANK_REP_REGION"/>
    <property type="match status" value="1"/>
</dbReference>
<dbReference type="PROSITE" id="PS50088">
    <property type="entry name" value="ANK_REPEAT"/>
    <property type="match status" value="1"/>
</dbReference>
<dbReference type="PROSITE" id="PS50174">
    <property type="entry name" value="G_PATCH"/>
    <property type="match status" value="1"/>
</dbReference>
<evidence type="ECO:0000255" key="1">
    <source>
        <dbReference type="PROSITE-ProRule" id="PRU00092"/>
    </source>
</evidence>
<evidence type="ECO:0000305" key="2"/>
<evidence type="ECO:0000312" key="3">
    <source>
        <dbReference type="EMBL" id="AAM12288.1"/>
    </source>
</evidence>
<protein>
    <recommendedName>
        <fullName>G patch domain and ankyrin repeat-containing protein 1 homolog</fullName>
    </recommendedName>
</protein>
<proteinExistence type="evidence at transcript level"/>
<organism evidence="3">
    <name type="scientific">Drosophila melanogaster</name>
    <name type="common">Fruit fly</name>
    <dbReference type="NCBI Taxonomy" id="7227"/>
    <lineage>
        <taxon>Eukaryota</taxon>
        <taxon>Metazoa</taxon>
        <taxon>Ecdysozoa</taxon>
        <taxon>Arthropoda</taxon>
        <taxon>Hexapoda</taxon>
        <taxon>Insecta</taxon>
        <taxon>Pterygota</taxon>
        <taxon>Neoptera</taxon>
        <taxon>Endopterygota</taxon>
        <taxon>Diptera</taxon>
        <taxon>Brachycera</taxon>
        <taxon>Muscomorpha</taxon>
        <taxon>Ephydroidea</taxon>
        <taxon>Drosophilidae</taxon>
        <taxon>Drosophila</taxon>
        <taxon>Sophophora</taxon>
    </lineage>
</organism>
<accession>Q9V7A7</accession>
<accession>Q8SWS4</accession>
<feature type="chain" id="PRO_0000066975" description="G patch domain and ankyrin repeat-containing protein 1 homolog">
    <location>
        <begin position="1"/>
        <end position="336"/>
    </location>
</feature>
<feature type="repeat" description="ANK 1" evidence="2">
    <location>
        <begin position="123"/>
        <end position="152"/>
    </location>
</feature>
<feature type="repeat" description="ANK 2" evidence="2">
    <location>
        <begin position="156"/>
        <end position="185"/>
    </location>
</feature>
<feature type="domain" description="G-patch" evidence="1">
    <location>
        <begin position="240"/>
        <end position="286"/>
    </location>
</feature>
<feature type="sequence conflict" description="In Ref. 3; AAM12288." evidence="2" ref="3">
    <original>K</original>
    <variation>E</variation>
    <location>
        <position position="208"/>
    </location>
</feature>
<sequence>MNSQNELHPNWLALTTLPLQLKRFVRAGDPDFIAESPKAVKHQIDGLNGAEAREFYKEVLDAPTTCQPNLPSTHKTAQTRREPERILVPFDKSKFFRLATSNKVEELSQMKASEEDLNSRDSFGWTALMMAACEGATEAVSWLVQRGVQVETSDKSGNTALKLAQRKGHLDVVHLLESLPILEETSEEDESVDGNNPFYCEICKRDYKETPWPIHQTSTVHQFNLKALPAHKLHKFNISAKNRGLQLMVKQGWDQEHGLGPSQSGRLYPVKTVLRKQRTGLGIEQQSARVSHFGAFDLNAVRRRDPIYQPRRTRSDMQREKVREWKRERYLRRVLS</sequence>
<gene>
    <name type="ORF">CG8152</name>
</gene>
<keyword id="KW-0040">ANK repeat</keyword>
<keyword id="KW-1185">Reference proteome</keyword>
<keyword id="KW-0677">Repeat</keyword>